<organism>
    <name type="scientific">Aliarcobacter butzleri (strain RM4018)</name>
    <name type="common">Arcobacter butzleri</name>
    <dbReference type="NCBI Taxonomy" id="367737"/>
    <lineage>
        <taxon>Bacteria</taxon>
        <taxon>Pseudomonadati</taxon>
        <taxon>Campylobacterota</taxon>
        <taxon>Epsilonproteobacteria</taxon>
        <taxon>Campylobacterales</taxon>
        <taxon>Arcobacteraceae</taxon>
        <taxon>Aliarcobacter</taxon>
    </lineage>
</organism>
<protein>
    <recommendedName>
        <fullName evidence="1">tRNA-2-methylthio-N(6)-dimethylallyladenosine synthase</fullName>
        <ecNumber evidence="1">2.8.4.3</ecNumber>
    </recommendedName>
    <alternativeName>
        <fullName evidence="1">(Dimethylallyl)adenosine tRNA methylthiotransferase MiaB</fullName>
    </alternativeName>
    <alternativeName>
        <fullName evidence="1">tRNA-i(6)A37 methylthiotransferase</fullName>
    </alternativeName>
</protein>
<name>MIAB_ALIB4</name>
<dbReference type="EC" id="2.8.4.3" evidence="1"/>
<dbReference type="EMBL" id="CP000361">
    <property type="protein sequence ID" value="ABV66523.1"/>
    <property type="molecule type" value="Genomic_DNA"/>
</dbReference>
<dbReference type="RefSeq" id="WP_012012110.1">
    <property type="nucleotide sequence ID" value="NC_009850.1"/>
</dbReference>
<dbReference type="SMR" id="A8ERE9"/>
<dbReference type="STRING" id="367737.Abu_0248"/>
<dbReference type="GeneID" id="24303975"/>
<dbReference type="KEGG" id="abu:Abu_0248"/>
<dbReference type="eggNOG" id="COG0621">
    <property type="taxonomic scope" value="Bacteria"/>
</dbReference>
<dbReference type="HOGENOM" id="CLU_018697_2_0_7"/>
<dbReference type="Proteomes" id="UP000001136">
    <property type="component" value="Chromosome"/>
</dbReference>
<dbReference type="GO" id="GO:0005829">
    <property type="term" value="C:cytosol"/>
    <property type="evidence" value="ECO:0007669"/>
    <property type="project" value="TreeGrafter"/>
</dbReference>
<dbReference type="GO" id="GO:0051539">
    <property type="term" value="F:4 iron, 4 sulfur cluster binding"/>
    <property type="evidence" value="ECO:0007669"/>
    <property type="project" value="UniProtKB-UniRule"/>
</dbReference>
<dbReference type="GO" id="GO:0046872">
    <property type="term" value="F:metal ion binding"/>
    <property type="evidence" value="ECO:0007669"/>
    <property type="project" value="UniProtKB-KW"/>
</dbReference>
<dbReference type="GO" id="GO:0035597">
    <property type="term" value="F:N6-isopentenyladenosine methylthiotransferase activity"/>
    <property type="evidence" value="ECO:0007669"/>
    <property type="project" value="TreeGrafter"/>
</dbReference>
<dbReference type="CDD" id="cd01335">
    <property type="entry name" value="Radical_SAM"/>
    <property type="match status" value="1"/>
</dbReference>
<dbReference type="FunFam" id="3.40.50.12160:FF:000003">
    <property type="entry name" value="CDK5 regulatory subunit-associated protein 1"/>
    <property type="match status" value="1"/>
</dbReference>
<dbReference type="FunFam" id="3.80.30.20:FF:000001">
    <property type="entry name" value="tRNA-2-methylthio-N(6)-dimethylallyladenosine synthase 2"/>
    <property type="match status" value="1"/>
</dbReference>
<dbReference type="Gene3D" id="3.40.50.12160">
    <property type="entry name" value="Methylthiotransferase, N-terminal domain"/>
    <property type="match status" value="1"/>
</dbReference>
<dbReference type="Gene3D" id="3.80.30.20">
    <property type="entry name" value="tm_1862 like domain"/>
    <property type="match status" value="1"/>
</dbReference>
<dbReference type="HAMAP" id="MF_01864">
    <property type="entry name" value="tRNA_metthiotr_MiaB"/>
    <property type="match status" value="1"/>
</dbReference>
<dbReference type="InterPro" id="IPR006638">
    <property type="entry name" value="Elp3/MiaA/NifB-like_rSAM"/>
</dbReference>
<dbReference type="InterPro" id="IPR005839">
    <property type="entry name" value="Methylthiotransferase"/>
</dbReference>
<dbReference type="InterPro" id="IPR020612">
    <property type="entry name" value="Methylthiotransferase_CS"/>
</dbReference>
<dbReference type="InterPro" id="IPR013848">
    <property type="entry name" value="Methylthiotransferase_N"/>
</dbReference>
<dbReference type="InterPro" id="IPR038135">
    <property type="entry name" value="Methylthiotransferase_N_sf"/>
</dbReference>
<dbReference type="InterPro" id="IPR006463">
    <property type="entry name" value="MiaB_methiolase"/>
</dbReference>
<dbReference type="InterPro" id="IPR007197">
    <property type="entry name" value="rSAM"/>
</dbReference>
<dbReference type="InterPro" id="IPR023404">
    <property type="entry name" value="rSAM_horseshoe"/>
</dbReference>
<dbReference type="InterPro" id="IPR002792">
    <property type="entry name" value="TRAM_dom"/>
</dbReference>
<dbReference type="NCBIfam" id="TIGR01574">
    <property type="entry name" value="miaB-methiolase"/>
    <property type="match status" value="1"/>
</dbReference>
<dbReference type="NCBIfam" id="TIGR00089">
    <property type="entry name" value="MiaB/RimO family radical SAM methylthiotransferase"/>
    <property type="match status" value="1"/>
</dbReference>
<dbReference type="PANTHER" id="PTHR43020">
    <property type="entry name" value="CDK5 REGULATORY SUBUNIT-ASSOCIATED PROTEIN 1"/>
    <property type="match status" value="1"/>
</dbReference>
<dbReference type="PANTHER" id="PTHR43020:SF2">
    <property type="entry name" value="MITOCHONDRIAL TRNA METHYLTHIOTRANSFERASE CDK5RAP1"/>
    <property type="match status" value="1"/>
</dbReference>
<dbReference type="Pfam" id="PF04055">
    <property type="entry name" value="Radical_SAM"/>
    <property type="match status" value="1"/>
</dbReference>
<dbReference type="Pfam" id="PF01938">
    <property type="entry name" value="TRAM"/>
    <property type="match status" value="1"/>
</dbReference>
<dbReference type="Pfam" id="PF00919">
    <property type="entry name" value="UPF0004"/>
    <property type="match status" value="1"/>
</dbReference>
<dbReference type="SFLD" id="SFLDF00273">
    <property type="entry name" value="(dimethylallyl)adenosine_tRNA"/>
    <property type="match status" value="1"/>
</dbReference>
<dbReference type="SFLD" id="SFLDG01082">
    <property type="entry name" value="B12-binding_domain_containing"/>
    <property type="match status" value="1"/>
</dbReference>
<dbReference type="SFLD" id="SFLDG01061">
    <property type="entry name" value="methylthiotransferase"/>
    <property type="match status" value="1"/>
</dbReference>
<dbReference type="SMART" id="SM00729">
    <property type="entry name" value="Elp3"/>
    <property type="match status" value="1"/>
</dbReference>
<dbReference type="SUPFAM" id="SSF102114">
    <property type="entry name" value="Radical SAM enzymes"/>
    <property type="match status" value="1"/>
</dbReference>
<dbReference type="PROSITE" id="PS51449">
    <property type="entry name" value="MTTASE_N"/>
    <property type="match status" value="1"/>
</dbReference>
<dbReference type="PROSITE" id="PS01278">
    <property type="entry name" value="MTTASE_RADICAL"/>
    <property type="match status" value="1"/>
</dbReference>
<dbReference type="PROSITE" id="PS51918">
    <property type="entry name" value="RADICAL_SAM"/>
    <property type="match status" value="1"/>
</dbReference>
<dbReference type="PROSITE" id="PS50926">
    <property type="entry name" value="TRAM"/>
    <property type="match status" value="1"/>
</dbReference>
<sequence>MSSNKKLFIQTLGCQMNDTDSQHIQAELEKHKGYVTTQNIEDADLIIINTCSVRERPVQKLFSEIGQFNKKKKEGAKIGVCGCTASHLGQDIIKRAPYVDFVVGARNISKIKDVVDVKGAVEVSIDNDESTYEFSTAKTNKYRASVNISVGCDKKCTYCIVPSTRGEEISIPPEMIVEQVRKSVEQGAVEVMLLGQNVNSYGRKFSDKREKYTFTKLLQDVSKIDGLERIRFTSPHPLHMDDEFIEEFAKNPKISKCIHMPLQSGSTSVLKAMKRGYSKEWFLNRASKMRELVPNLRITTDIIVAFPGETQEDFLDTLDVVEQVKFDQIFNFKYSPRPGTEALNLKDKELPDEIGSQRLIDLIELHKRYLEESMPKLIGETLNILVESLKPNGEVCGYTDNYLQVFAKGSDELLGKFVNVKITDVTRTSLKGEVVN</sequence>
<gene>
    <name evidence="1" type="primary">miaB</name>
    <name type="ordered locus">Abu_0248</name>
</gene>
<proteinExistence type="inferred from homology"/>
<keyword id="KW-0004">4Fe-4S</keyword>
<keyword id="KW-0963">Cytoplasm</keyword>
<keyword id="KW-0408">Iron</keyword>
<keyword id="KW-0411">Iron-sulfur</keyword>
<keyword id="KW-0479">Metal-binding</keyword>
<keyword id="KW-1185">Reference proteome</keyword>
<keyword id="KW-0949">S-adenosyl-L-methionine</keyword>
<keyword id="KW-0808">Transferase</keyword>
<keyword id="KW-0819">tRNA processing</keyword>
<evidence type="ECO:0000255" key="1">
    <source>
        <dbReference type="HAMAP-Rule" id="MF_01864"/>
    </source>
</evidence>
<evidence type="ECO:0000255" key="2">
    <source>
        <dbReference type="PROSITE-ProRule" id="PRU01266"/>
    </source>
</evidence>
<feature type="chain" id="PRO_0000374116" description="tRNA-2-methylthio-N(6)-dimethylallyladenosine synthase">
    <location>
        <begin position="1"/>
        <end position="436"/>
    </location>
</feature>
<feature type="domain" description="MTTase N-terminal" evidence="1">
    <location>
        <begin position="5"/>
        <end position="120"/>
    </location>
</feature>
<feature type="domain" description="Radical SAM core" evidence="2">
    <location>
        <begin position="138"/>
        <end position="372"/>
    </location>
</feature>
<feature type="domain" description="TRAM" evidence="1">
    <location>
        <begin position="375"/>
        <end position="436"/>
    </location>
</feature>
<feature type="binding site" evidence="1">
    <location>
        <position position="14"/>
    </location>
    <ligand>
        <name>[4Fe-4S] cluster</name>
        <dbReference type="ChEBI" id="CHEBI:49883"/>
        <label>1</label>
    </ligand>
</feature>
<feature type="binding site" evidence="1">
    <location>
        <position position="51"/>
    </location>
    <ligand>
        <name>[4Fe-4S] cluster</name>
        <dbReference type="ChEBI" id="CHEBI:49883"/>
        <label>1</label>
    </ligand>
</feature>
<feature type="binding site" evidence="1">
    <location>
        <position position="83"/>
    </location>
    <ligand>
        <name>[4Fe-4S] cluster</name>
        <dbReference type="ChEBI" id="CHEBI:49883"/>
        <label>1</label>
    </ligand>
</feature>
<feature type="binding site" evidence="1">
    <location>
        <position position="152"/>
    </location>
    <ligand>
        <name>[4Fe-4S] cluster</name>
        <dbReference type="ChEBI" id="CHEBI:49883"/>
        <label>2</label>
        <note>4Fe-4S-S-AdoMet</note>
    </ligand>
</feature>
<feature type="binding site" evidence="1">
    <location>
        <position position="156"/>
    </location>
    <ligand>
        <name>[4Fe-4S] cluster</name>
        <dbReference type="ChEBI" id="CHEBI:49883"/>
        <label>2</label>
        <note>4Fe-4S-S-AdoMet</note>
    </ligand>
</feature>
<feature type="binding site" evidence="1">
    <location>
        <position position="159"/>
    </location>
    <ligand>
        <name>[4Fe-4S] cluster</name>
        <dbReference type="ChEBI" id="CHEBI:49883"/>
        <label>2</label>
        <note>4Fe-4S-S-AdoMet</note>
    </ligand>
</feature>
<reference key="1">
    <citation type="journal article" date="2007" name="PLoS ONE">
        <title>The complete genome sequence and analysis of the Epsilonproteobacterium Arcobacter butzleri.</title>
        <authorList>
            <person name="Miller W.G."/>
            <person name="Parker C.T."/>
            <person name="Rubenfield M."/>
            <person name="Mendz G.L."/>
            <person name="Woesten M.M.S.M."/>
            <person name="Ussery D.W."/>
            <person name="Stolz J.F."/>
            <person name="Binnewies T.T."/>
            <person name="Hallin P.F."/>
            <person name="Wang G."/>
            <person name="Malek J.A."/>
            <person name="Rogosin A."/>
            <person name="Stanker L.H."/>
            <person name="Mandrell R.E."/>
        </authorList>
    </citation>
    <scope>NUCLEOTIDE SEQUENCE [LARGE SCALE GENOMIC DNA]</scope>
    <source>
        <strain>RM4018</strain>
    </source>
</reference>
<comment type="function">
    <text evidence="1">Catalyzes the methylthiolation of N6-(dimethylallyl)adenosine (i(6)A), leading to the formation of 2-methylthio-N6-(dimethylallyl)adenosine (ms(2)i(6)A) at position 37 in tRNAs that read codons beginning with uridine.</text>
</comment>
<comment type="catalytic activity">
    <reaction evidence="1">
        <text>N(6)-dimethylallyladenosine(37) in tRNA + (sulfur carrier)-SH + AH2 + 2 S-adenosyl-L-methionine = 2-methylsulfanyl-N(6)-dimethylallyladenosine(37) in tRNA + (sulfur carrier)-H + 5'-deoxyadenosine + L-methionine + A + S-adenosyl-L-homocysteine + 2 H(+)</text>
        <dbReference type="Rhea" id="RHEA:37067"/>
        <dbReference type="Rhea" id="RHEA-COMP:10375"/>
        <dbReference type="Rhea" id="RHEA-COMP:10376"/>
        <dbReference type="Rhea" id="RHEA-COMP:14737"/>
        <dbReference type="Rhea" id="RHEA-COMP:14739"/>
        <dbReference type="ChEBI" id="CHEBI:13193"/>
        <dbReference type="ChEBI" id="CHEBI:15378"/>
        <dbReference type="ChEBI" id="CHEBI:17319"/>
        <dbReference type="ChEBI" id="CHEBI:17499"/>
        <dbReference type="ChEBI" id="CHEBI:29917"/>
        <dbReference type="ChEBI" id="CHEBI:57844"/>
        <dbReference type="ChEBI" id="CHEBI:57856"/>
        <dbReference type="ChEBI" id="CHEBI:59789"/>
        <dbReference type="ChEBI" id="CHEBI:64428"/>
        <dbReference type="ChEBI" id="CHEBI:74415"/>
        <dbReference type="ChEBI" id="CHEBI:74417"/>
        <dbReference type="EC" id="2.8.4.3"/>
    </reaction>
</comment>
<comment type="cofactor">
    <cofactor evidence="1">
        <name>[4Fe-4S] cluster</name>
        <dbReference type="ChEBI" id="CHEBI:49883"/>
    </cofactor>
    <text evidence="1">Binds 2 [4Fe-4S] clusters. One cluster is coordinated with 3 cysteines and an exchangeable S-adenosyl-L-methionine.</text>
</comment>
<comment type="subunit">
    <text evidence="1">Monomer.</text>
</comment>
<comment type="subcellular location">
    <subcellularLocation>
        <location evidence="1">Cytoplasm</location>
    </subcellularLocation>
</comment>
<comment type="similarity">
    <text evidence="1">Belongs to the methylthiotransferase family. MiaB subfamily.</text>
</comment>
<accession>A8ERE9</accession>